<dbReference type="EMBL" id="CP000854">
    <property type="protein sequence ID" value="ACC39493.1"/>
    <property type="molecule type" value="Genomic_DNA"/>
</dbReference>
<dbReference type="RefSeq" id="WP_011739061.1">
    <property type="nucleotide sequence ID" value="NC_010612.1"/>
</dbReference>
<dbReference type="SMR" id="B2HSN5"/>
<dbReference type="STRING" id="216594.MMAR_1035"/>
<dbReference type="GeneID" id="93438596"/>
<dbReference type="KEGG" id="mmi:MMAR_1035"/>
<dbReference type="eggNOG" id="COG0185">
    <property type="taxonomic scope" value="Bacteria"/>
</dbReference>
<dbReference type="HOGENOM" id="CLU_144911_0_1_11"/>
<dbReference type="OrthoDB" id="9797833at2"/>
<dbReference type="Proteomes" id="UP000001190">
    <property type="component" value="Chromosome"/>
</dbReference>
<dbReference type="GO" id="GO:0005737">
    <property type="term" value="C:cytoplasm"/>
    <property type="evidence" value="ECO:0007669"/>
    <property type="project" value="UniProtKB-ARBA"/>
</dbReference>
<dbReference type="GO" id="GO:0015935">
    <property type="term" value="C:small ribosomal subunit"/>
    <property type="evidence" value="ECO:0007669"/>
    <property type="project" value="InterPro"/>
</dbReference>
<dbReference type="GO" id="GO:0019843">
    <property type="term" value="F:rRNA binding"/>
    <property type="evidence" value="ECO:0007669"/>
    <property type="project" value="UniProtKB-UniRule"/>
</dbReference>
<dbReference type="GO" id="GO:0003735">
    <property type="term" value="F:structural constituent of ribosome"/>
    <property type="evidence" value="ECO:0007669"/>
    <property type="project" value="InterPro"/>
</dbReference>
<dbReference type="GO" id="GO:0000028">
    <property type="term" value="P:ribosomal small subunit assembly"/>
    <property type="evidence" value="ECO:0007669"/>
    <property type="project" value="TreeGrafter"/>
</dbReference>
<dbReference type="GO" id="GO:0006412">
    <property type="term" value="P:translation"/>
    <property type="evidence" value="ECO:0007669"/>
    <property type="project" value="UniProtKB-UniRule"/>
</dbReference>
<dbReference type="FunFam" id="3.30.860.10:FF:000001">
    <property type="entry name" value="30S ribosomal protein S19"/>
    <property type="match status" value="1"/>
</dbReference>
<dbReference type="Gene3D" id="3.30.860.10">
    <property type="entry name" value="30s Ribosomal Protein S19, Chain A"/>
    <property type="match status" value="1"/>
</dbReference>
<dbReference type="HAMAP" id="MF_00531">
    <property type="entry name" value="Ribosomal_uS19"/>
    <property type="match status" value="1"/>
</dbReference>
<dbReference type="InterPro" id="IPR002222">
    <property type="entry name" value="Ribosomal_uS19"/>
</dbReference>
<dbReference type="InterPro" id="IPR005732">
    <property type="entry name" value="Ribosomal_uS19_bac-type"/>
</dbReference>
<dbReference type="InterPro" id="IPR020934">
    <property type="entry name" value="Ribosomal_uS19_CS"/>
</dbReference>
<dbReference type="InterPro" id="IPR023575">
    <property type="entry name" value="Ribosomal_uS19_SF"/>
</dbReference>
<dbReference type="NCBIfam" id="TIGR01050">
    <property type="entry name" value="rpsS_bact"/>
    <property type="match status" value="1"/>
</dbReference>
<dbReference type="PANTHER" id="PTHR11880">
    <property type="entry name" value="RIBOSOMAL PROTEIN S19P FAMILY MEMBER"/>
    <property type="match status" value="1"/>
</dbReference>
<dbReference type="PANTHER" id="PTHR11880:SF8">
    <property type="entry name" value="SMALL RIBOSOMAL SUBUNIT PROTEIN US19M"/>
    <property type="match status" value="1"/>
</dbReference>
<dbReference type="Pfam" id="PF00203">
    <property type="entry name" value="Ribosomal_S19"/>
    <property type="match status" value="1"/>
</dbReference>
<dbReference type="PIRSF" id="PIRSF002144">
    <property type="entry name" value="Ribosomal_S19"/>
    <property type="match status" value="1"/>
</dbReference>
<dbReference type="PRINTS" id="PR00975">
    <property type="entry name" value="RIBOSOMALS19"/>
</dbReference>
<dbReference type="SUPFAM" id="SSF54570">
    <property type="entry name" value="Ribosomal protein S19"/>
    <property type="match status" value="1"/>
</dbReference>
<dbReference type="PROSITE" id="PS00323">
    <property type="entry name" value="RIBOSOMAL_S19"/>
    <property type="match status" value="1"/>
</dbReference>
<reference key="1">
    <citation type="journal article" date="2008" name="Genome Res.">
        <title>Insights from the complete genome sequence of Mycobacterium marinum on the evolution of Mycobacterium tuberculosis.</title>
        <authorList>
            <person name="Stinear T.P."/>
            <person name="Seemann T."/>
            <person name="Harrison P.F."/>
            <person name="Jenkin G.A."/>
            <person name="Davies J.K."/>
            <person name="Johnson P.D."/>
            <person name="Abdellah Z."/>
            <person name="Arrowsmith C."/>
            <person name="Chillingworth T."/>
            <person name="Churcher C."/>
            <person name="Clarke K."/>
            <person name="Cronin A."/>
            <person name="Davis P."/>
            <person name="Goodhead I."/>
            <person name="Holroyd N."/>
            <person name="Jagels K."/>
            <person name="Lord A."/>
            <person name="Moule S."/>
            <person name="Mungall K."/>
            <person name="Norbertczak H."/>
            <person name="Quail M.A."/>
            <person name="Rabbinowitsch E."/>
            <person name="Walker D."/>
            <person name="White B."/>
            <person name="Whitehead S."/>
            <person name="Small P.L."/>
            <person name="Brosch R."/>
            <person name="Ramakrishnan L."/>
            <person name="Fischbach M.A."/>
            <person name="Parkhill J."/>
            <person name="Cole S.T."/>
        </authorList>
    </citation>
    <scope>NUCLEOTIDE SEQUENCE [LARGE SCALE GENOMIC DNA]</scope>
    <source>
        <strain>ATCC BAA-535 / M</strain>
    </source>
</reference>
<sequence>MPRSLKKGPFVDDHLLKKVDVQNEKNTKQVIKTWSRRSTIIPDFIGHTFAVHDGRKHVPVFVTESMVGHKLGEFAPTRTFKGHIKDDRKSKRR</sequence>
<accession>B2HSN5</accession>
<proteinExistence type="inferred from homology"/>
<name>RS19_MYCMM</name>
<organism>
    <name type="scientific">Mycobacterium marinum (strain ATCC BAA-535 / M)</name>
    <dbReference type="NCBI Taxonomy" id="216594"/>
    <lineage>
        <taxon>Bacteria</taxon>
        <taxon>Bacillati</taxon>
        <taxon>Actinomycetota</taxon>
        <taxon>Actinomycetes</taxon>
        <taxon>Mycobacteriales</taxon>
        <taxon>Mycobacteriaceae</taxon>
        <taxon>Mycobacterium</taxon>
        <taxon>Mycobacterium ulcerans group</taxon>
    </lineage>
</organism>
<comment type="function">
    <text evidence="1">Protein S19 forms a complex with S13 that binds strongly to the 16S ribosomal RNA.</text>
</comment>
<comment type="similarity">
    <text evidence="1">Belongs to the universal ribosomal protein uS19 family.</text>
</comment>
<protein>
    <recommendedName>
        <fullName evidence="1">Small ribosomal subunit protein uS19</fullName>
    </recommendedName>
    <alternativeName>
        <fullName evidence="2">30S ribosomal protein S19</fullName>
    </alternativeName>
</protein>
<keyword id="KW-1185">Reference proteome</keyword>
<keyword id="KW-0687">Ribonucleoprotein</keyword>
<keyword id="KW-0689">Ribosomal protein</keyword>
<keyword id="KW-0694">RNA-binding</keyword>
<keyword id="KW-0699">rRNA-binding</keyword>
<feature type="chain" id="PRO_1000128008" description="Small ribosomal subunit protein uS19">
    <location>
        <begin position="1"/>
        <end position="93"/>
    </location>
</feature>
<gene>
    <name evidence="1" type="primary">rpsS</name>
    <name type="ordered locus">MMAR_1035</name>
</gene>
<evidence type="ECO:0000255" key="1">
    <source>
        <dbReference type="HAMAP-Rule" id="MF_00531"/>
    </source>
</evidence>
<evidence type="ECO:0000305" key="2"/>